<accession>A7MVH4</accession>
<feature type="chain" id="PRO_1000060577" description="Integration host factor subunit alpha">
    <location>
        <begin position="1"/>
        <end position="98"/>
    </location>
</feature>
<feature type="region of interest" description="Disordered" evidence="2">
    <location>
        <begin position="51"/>
        <end position="71"/>
    </location>
</feature>
<feature type="compositionally biased region" description="Basic and acidic residues" evidence="2">
    <location>
        <begin position="53"/>
        <end position="69"/>
    </location>
</feature>
<comment type="function">
    <text evidence="1">This protein is one of the two subunits of integration host factor, a specific DNA-binding protein that functions in genetic recombination as well as in transcriptional and translational control.</text>
</comment>
<comment type="subunit">
    <text evidence="1">Heterodimer of an alpha and a beta chain.</text>
</comment>
<comment type="similarity">
    <text evidence="1">Belongs to the bacterial histone-like protein family.</text>
</comment>
<proteinExistence type="inferred from homology"/>
<keyword id="KW-0233">DNA recombination</keyword>
<keyword id="KW-0238">DNA-binding</keyword>
<keyword id="KW-0804">Transcription</keyword>
<keyword id="KW-0805">Transcription regulation</keyword>
<keyword id="KW-0810">Translation regulation</keyword>
<protein>
    <recommendedName>
        <fullName evidence="1">Integration host factor subunit alpha</fullName>
        <shortName evidence="1">IHF-alpha</shortName>
    </recommendedName>
</protein>
<name>IHFA_VIBC1</name>
<reference key="1">
    <citation type="submission" date="2007-08" db="EMBL/GenBank/DDBJ databases">
        <authorList>
            <consortium name="The Vibrio harveyi Genome Sequencing Project"/>
            <person name="Bassler B."/>
            <person name="Clifton S.W."/>
            <person name="Fulton L."/>
            <person name="Delehaunty K."/>
            <person name="Fronick C."/>
            <person name="Harrison M."/>
            <person name="Markivic C."/>
            <person name="Fulton R."/>
            <person name="Tin-Wollam A.-M."/>
            <person name="Shah N."/>
            <person name="Pepin K."/>
            <person name="Nash W."/>
            <person name="Thiruvilangam P."/>
            <person name="Bhonagiri V."/>
            <person name="Waters C."/>
            <person name="Tu K.C."/>
            <person name="Irgon J."/>
            <person name="Wilson R.K."/>
        </authorList>
    </citation>
    <scope>NUCLEOTIDE SEQUENCE [LARGE SCALE GENOMIC DNA]</scope>
    <source>
        <strain>ATCC BAA-1116 / BB120</strain>
    </source>
</reference>
<organism>
    <name type="scientific">Vibrio campbellii (strain ATCC BAA-1116)</name>
    <dbReference type="NCBI Taxonomy" id="2902295"/>
    <lineage>
        <taxon>Bacteria</taxon>
        <taxon>Pseudomonadati</taxon>
        <taxon>Pseudomonadota</taxon>
        <taxon>Gammaproteobacteria</taxon>
        <taxon>Vibrionales</taxon>
        <taxon>Vibrionaceae</taxon>
        <taxon>Vibrio</taxon>
    </lineage>
</organism>
<evidence type="ECO:0000255" key="1">
    <source>
        <dbReference type="HAMAP-Rule" id="MF_00380"/>
    </source>
</evidence>
<evidence type="ECO:0000256" key="2">
    <source>
        <dbReference type="SAM" id="MobiDB-lite"/>
    </source>
</evidence>
<dbReference type="EMBL" id="CP000789">
    <property type="protein sequence ID" value="ABU71077.1"/>
    <property type="molecule type" value="Genomic_DNA"/>
</dbReference>
<dbReference type="RefSeq" id="WP_005427969.1">
    <property type="nucleotide sequence ID" value="NC_022269.1"/>
</dbReference>
<dbReference type="SMR" id="A7MVH4"/>
<dbReference type="GeneID" id="67377529"/>
<dbReference type="KEGG" id="vha:VIBHAR_02112"/>
<dbReference type="PATRIC" id="fig|338187.25.peg.579"/>
<dbReference type="Proteomes" id="UP000008152">
    <property type="component" value="Chromosome I"/>
</dbReference>
<dbReference type="GO" id="GO:0005829">
    <property type="term" value="C:cytosol"/>
    <property type="evidence" value="ECO:0007669"/>
    <property type="project" value="TreeGrafter"/>
</dbReference>
<dbReference type="GO" id="GO:0003677">
    <property type="term" value="F:DNA binding"/>
    <property type="evidence" value="ECO:0007669"/>
    <property type="project" value="UniProtKB-UniRule"/>
</dbReference>
<dbReference type="GO" id="GO:0030527">
    <property type="term" value="F:structural constituent of chromatin"/>
    <property type="evidence" value="ECO:0007669"/>
    <property type="project" value="InterPro"/>
</dbReference>
<dbReference type="GO" id="GO:0006310">
    <property type="term" value="P:DNA recombination"/>
    <property type="evidence" value="ECO:0007669"/>
    <property type="project" value="UniProtKB-UniRule"/>
</dbReference>
<dbReference type="GO" id="GO:1905087">
    <property type="term" value="P:positive regulation of bioluminescence"/>
    <property type="evidence" value="ECO:0000315"/>
    <property type="project" value="CACAO"/>
</dbReference>
<dbReference type="GO" id="GO:0006355">
    <property type="term" value="P:regulation of DNA-templated transcription"/>
    <property type="evidence" value="ECO:0007669"/>
    <property type="project" value="UniProtKB-UniRule"/>
</dbReference>
<dbReference type="GO" id="GO:0006417">
    <property type="term" value="P:regulation of translation"/>
    <property type="evidence" value="ECO:0007669"/>
    <property type="project" value="UniProtKB-UniRule"/>
</dbReference>
<dbReference type="CDD" id="cd13835">
    <property type="entry name" value="IHF_A"/>
    <property type="match status" value="1"/>
</dbReference>
<dbReference type="FunFam" id="4.10.520.10:FF:000002">
    <property type="entry name" value="Integration host factor subunit alpha"/>
    <property type="match status" value="1"/>
</dbReference>
<dbReference type="Gene3D" id="4.10.520.10">
    <property type="entry name" value="IHF-like DNA-binding proteins"/>
    <property type="match status" value="1"/>
</dbReference>
<dbReference type="HAMAP" id="MF_00380">
    <property type="entry name" value="IHF_alpha"/>
    <property type="match status" value="1"/>
</dbReference>
<dbReference type="InterPro" id="IPR000119">
    <property type="entry name" value="Hist_DNA-bd"/>
</dbReference>
<dbReference type="InterPro" id="IPR020816">
    <property type="entry name" value="Histone-like_DNA-bd_CS"/>
</dbReference>
<dbReference type="InterPro" id="IPR010992">
    <property type="entry name" value="IHF-like_DNA-bd_dom_sf"/>
</dbReference>
<dbReference type="InterPro" id="IPR005684">
    <property type="entry name" value="IHF_alpha"/>
</dbReference>
<dbReference type="NCBIfam" id="TIGR00987">
    <property type="entry name" value="himA"/>
    <property type="match status" value="1"/>
</dbReference>
<dbReference type="NCBIfam" id="NF001401">
    <property type="entry name" value="PRK00285.1"/>
    <property type="match status" value="1"/>
</dbReference>
<dbReference type="PANTHER" id="PTHR33175">
    <property type="entry name" value="DNA-BINDING PROTEIN HU"/>
    <property type="match status" value="1"/>
</dbReference>
<dbReference type="PANTHER" id="PTHR33175:SF2">
    <property type="entry name" value="INTEGRATION HOST FACTOR SUBUNIT ALPHA"/>
    <property type="match status" value="1"/>
</dbReference>
<dbReference type="Pfam" id="PF00216">
    <property type="entry name" value="Bac_DNA_binding"/>
    <property type="match status" value="1"/>
</dbReference>
<dbReference type="PRINTS" id="PR01727">
    <property type="entry name" value="DNABINDINGHU"/>
</dbReference>
<dbReference type="SMART" id="SM00411">
    <property type="entry name" value="BHL"/>
    <property type="match status" value="1"/>
</dbReference>
<dbReference type="SUPFAM" id="SSF47729">
    <property type="entry name" value="IHF-like DNA-binding proteins"/>
    <property type="match status" value="1"/>
</dbReference>
<dbReference type="PROSITE" id="PS00045">
    <property type="entry name" value="HISTONE_LIKE"/>
    <property type="match status" value="1"/>
</dbReference>
<gene>
    <name evidence="1" type="primary">ihfA</name>
    <name evidence="1" type="synonym">himA</name>
    <name type="ordered locus">VIBHAR_02112</name>
</gene>
<sequence>MALTKAELAENLFDKLGFSKRDAKETVEVFFEEIRKALESGEQVKLSGFGNFDLRDKNERPGRNPKTGEDIPITARRVVTFRPGQKLKARVENLKADQ</sequence>